<feature type="chain" id="PRO_0000234392" description="Protein orai-2">
    <location>
        <begin position="1"/>
        <end position="250"/>
    </location>
</feature>
<feature type="transmembrane region" description="Helical" evidence="2">
    <location>
        <begin position="66"/>
        <end position="83"/>
    </location>
</feature>
<feature type="transmembrane region" description="Helical" evidence="2">
    <location>
        <begin position="94"/>
        <end position="114"/>
    </location>
</feature>
<feature type="transmembrane region" description="Helical" evidence="2">
    <location>
        <begin position="148"/>
        <end position="168"/>
    </location>
</feature>
<feature type="transmembrane region" description="Helical" evidence="2">
    <location>
        <begin position="192"/>
        <end position="212"/>
    </location>
</feature>
<feature type="site" description="Confers selective permeability to Ca(2+) ions" evidence="1">
    <location>
        <position position="80"/>
    </location>
</feature>
<evidence type="ECO:0000250" key="1">
    <source>
        <dbReference type="UniProtKB" id="Q96SN7"/>
    </source>
</evidence>
<evidence type="ECO:0000255" key="2"/>
<evidence type="ECO:0000305" key="3"/>
<comment type="function">
    <text evidence="1">Pore-forming subunit of inward rectifying Ca(2+) release-activated Ca(2+) (CRAC) channels. Assembles with ORAI1 and ORAI3 to form hexameric CRAC channels that mediate Ca(2+) influx upon depletion of endoplasmic reticulum Ca(2+) store and channel activation by Ca(2+) sensor STIM1, a process known as store-operated Ca(2+) entry (SOCE). Various pore subunit combinations may account for distinct CRAC channel spatiotemporal and cell-type specific dynamics. ORAI1 mainly contributes to the generation of Ca(2+) plateaus involved in sustained Ca(2+) entry and is dispensable for cytosolic Ca(2+) oscillations, whereas ORAI2 and ORAI3 generate oscillatory patterns. CRAC channels assemble in Ca(2+) signaling microdomains where Ca(2+) influx is coupled to calmodulin and calcineurin signaling and activation of NFAT transcription factors recruited to ORAI1 via AKAP5. CRAC channels are the main pathway for Ca(2+) influx in T cells and promote the immune response to pathogens by activating NFAT-dependent cytokine and chemokine transcription.</text>
</comment>
<comment type="catalytic activity">
    <reaction evidence="1">
        <text>Ca(2+)(in) = Ca(2+)(out)</text>
        <dbReference type="Rhea" id="RHEA:29671"/>
        <dbReference type="ChEBI" id="CHEBI:29108"/>
    </reaction>
    <physiologicalReaction direction="right-to-left" evidence="1">
        <dbReference type="Rhea" id="RHEA:29673"/>
    </physiologicalReaction>
</comment>
<comment type="activity regulation">
    <text evidence="1">CRAC channels are regulated by fast Ca(2+)-dependent inactivation (FCDI), a mechanism that limits Ca(2+) influx and cell toxicity. ORAI2 channels display prominent FCDI. Inhibited by lanthanides such as Gd(3+) ions.</text>
</comment>
<comment type="subunit">
    <text evidence="1">Oligomerizes in homomeric and heteromeric ORAI complexes. Native CRAC channels most likely consist of hexameric ORAI heteromers, implying that diverse ORAI1, ORAI2 and ORAI3 subunit combinations with distinct biophysical properties can operate in a cell-type specific way. Interacts with STIM1; this regulates channel activity. Interacts with CRACR2A/EFCAB4B.</text>
</comment>
<comment type="subcellular location">
    <subcellularLocation>
        <location evidence="1">Cell membrane</location>
        <topology evidence="2">Multi-pass membrane protein</topology>
    </subcellularLocation>
    <text evidence="1">Colocalizes with STIM1 upon store depletion.</text>
</comment>
<comment type="similarity">
    <text evidence="3">Belongs to the Orai family.</text>
</comment>
<comment type="sequence caution" evidence="3">
    <conflict type="frameshift">
        <sequence resource="EMBL-CDS" id="BAC31410"/>
    </conflict>
</comment>
<gene>
    <name type="primary">Orai2</name>
    <name type="synonym">Tmem142b</name>
</gene>
<reference key="1">
    <citation type="journal article" date="2005" name="Science">
        <title>The transcriptional landscape of the mammalian genome.</title>
        <authorList>
            <person name="Carninci P."/>
            <person name="Kasukawa T."/>
            <person name="Katayama S."/>
            <person name="Gough J."/>
            <person name="Frith M.C."/>
            <person name="Maeda N."/>
            <person name="Oyama R."/>
            <person name="Ravasi T."/>
            <person name="Lenhard B."/>
            <person name="Wells C."/>
            <person name="Kodzius R."/>
            <person name="Shimokawa K."/>
            <person name="Bajic V.B."/>
            <person name="Brenner S.E."/>
            <person name="Batalov S."/>
            <person name="Forrest A.R."/>
            <person name="Zavolan M."/>
            <person name="Davis M.J."/>
            <person name="Wilming L.G."/>
            <person name="Aidinis V."/>
            <person name="Allen J.E."/>
            <person name="Ambesi-Impiombato A."/>
            <person name="Apweiler R."/>
            <person name="Aturaliya R.N."/>
            <person name="Bailey T.L."/>
            <person name="Bansal M."/>
            <person name="Baxter L."/>
            <person name="Beisel K.W."/>
            <person name="Bersano T."/>
            <person name="Bono H."/>
            <person name="Chalk A.M."/>
            <person name="Chiu K.P."/>
            <person name="Choudhary V."/>
            <person name="Christoffels A."/>
            <person name="Clutterbuck D.R."/>
            <person name="Crowe M.L."/>
            <person name="Dalla E."/>
            <person name="Dalrymple B.P."/>
            <person name="de Bono B."/>
            <person name="Della Gatta G."/>
            <person name="di Bernardo D."/>
            <person name="Down T."/>
            <person name="Engstrom P."/>
            <person name="Fagiolini M."/>
            <person name="Faulkner G."/>
            <person name="Fletcher C.F."/>
            <person name="Fukushima T."/>
            <person name="Furuno M."/>
            <person name="Futaki S."/>
            <person name="Gariboldi M."/>
            <person name="Georgii-Hemming P."/>
            <person name="Gingeras T.R."/>
            <person name="Gojobori T."/>
            <person name="Green R.E."/>
            <person name="Gustincich S."/>
            <person name="Harbers M."/>
            <person name="Hayashi Y."/>
            <person name="Hensch T.K."/>
            <person name="Hirokawa N."/>
            <person name="Hill D."/>
            <person name="Huminiecki L."/>
            <person name="Iacono M."/>
            <person name="Ikeo K."/>
            <person name="Iwama A."/>
            <person name="Ishikawa T."/>
            <person name="Jakt M."/>
            <person name="Kanapin A."/>
            <person name="Katoh M."/>
            <person name="Kawasawa Y."/>
            <person name="Kelso J."/>
            <person name="Kitamura H."/>
            <person name="Kitano H."/>
            <person name="Kollias G."/>
            <person name="Krishnan S.P."/>
            <person name="Kruger A."/>
            <person name="Kummerfeld S.K."/>
            <person name="Kurochkin I.V."/>
            <person name="Lareau L.F."/>
            <person name="Lazarevic D."/>
            <person name="Lipovich L."/>
            <person name="Liu J."/>
            <person name="Liuni S."/>
            <person name="McWilliam S."/>
            <person name="Madan Babu M."/>
            <person name="Madera M."/>
            <person name="Marchionni L."/>
            <person name="Matsuda H."/>
            <person name="Matsuzawa S."/>
            <person name="Miki H."/>
            <person name="Mignone F."/>
            <person name="Miyake S."/>
            <person name="Morris K."/>
            <person name="Mottagui-Tabar S."/>
            <person name="Mulder N."/>
            <person name="Nakano N."/>
            <person name="Nakauchi H."/>
            <person name="Ng P."/>
            <person name="Nilsson R."/>
            <person name="Nishiguchi S."/>
            <person name="Nishikawa S."/>
            <person name="Nori F."/>
            <person name="Ohara O."/>
            <person name="Okazaki Y."/>
            <person name="Orlando V."/>
            <person name="Pang K.C."/>
            <person name="Pavan W.J."/>
            <person name="Pavesi G."/>
            <person name="Pesole G."/>
            <person name="Petrovsky N."/>
            <person name="Piazza S."/>
            <person name="Reed J."/>
            <person name="Reid J.F."/>
            <person name="Ring B.Z."/>
            <person name="Ringwald M."/>
            <person name="Rost B."/>
            <person name="Ruan Y."/>
            <person name="Salzberg S.L."/>
            <person name="Sandelin A."/>
            <person name="Schneider C."/>
            <person name="Schoenbach C."/>
            <person name="Sekiguchi K."/>
            <person name="Semple C.A."/>
            <person name="Seno S."/>
            <person name="Sessa L."/>
            <person name="Sheng Y."/>
            <person name="Shibata Y."/>
            <person name="Shimada H."/>
            <person name="Shimada K."/>
            <person name="Silva D."/>
            <person name="Sinclair B."/>
            <person name="Sperling S."/>
            <person name="Stupka E."/>
            <person name="Sugiura K."/>
            <person name="Sultana R."/>
            <person name="Takenaka Y."/>
            <person name="Taki K."/>
            <person name="Tammoja K."/>
            <person name="Tan S.L."/>
            <person name="Tang S."/>
            <person name="Taylor M.S."/>
            <person name="Tegner J."/>
            <person name="Teichmann S.A."/>
            <person name="Ueda H.R."/>
            <person name="van Nimwegen E."/>
            <person name="Verardo R."/>
            <person name="Wei C.L."/>
            <person name="Yagi K."/>
            <person name="Yamanishi H."/>
            <person name="Zabarovsky E."/>
            <person name="Zhu S."/>
            <person name="Zimmer A."/>
            <person name="Hide W."/>
            <person name="Bult C."/>
            <person name="Grimmond S.M."/>
            <person name="Teasdale R.D."/>
            <person name="Liu E.T."/>
            <person name="Brusic V."/>
            <person name="Quackenbush J."/>
            <person name="Wahlestedt C."/>
            <person name="Mattick J.S."/>
            <person name="Hume D.A."/>
            <person name="Kai C."/>
            <person name="Sasaki D."/>
            <person name="Tomaru Y."/>
            <person name="Fukuda S."/>
            <person name="Kanamori-Katayama M."/>
            <person name="Suzuki M."/>
            <person name="Aoki J."/>
            <person name="Arakawa T."/>
            <person name="Iida J."/>
            <person name="Imamura K."/>
            <person name="Itoh M."/>
            <person name="Kato T."/>
            <person name="Kawaji H."/>
            <person name="Kawagashira N."/>
            <person name="Kawashima T."/>
            <person name="Kojima M."/>
            <person name="Kondo S."/>
            <person name="Konno H."/>
            <person name="Nakano K."/>
            <person name="Ninomiya N."/>
            <person name="Nishio T."/>
            <person name="Okada M."/>
            <person name="Plessy C."/>
            <person name="Shibata K."/>
            <person name="Shiraki T."/>
            <person name="Suzuki S."/>
            <person name="Tagami M."/>
            <person name="Waki K."/>
            <person name="Watahiki A."/>
            <person name="Okamura-Oho Y."/>
            <person name="Suzuki H."/>
            <person name="Kawai J."/>
            <person name="Hayashizaki Y."/>
        </authorList>
    </citation>
    <scope>NUCLEOTIDE SEQUENCE [LARGE SCALE MRNA]</scope>
    <source>
        <strain>C57BL/6J</strain>
        <tissue>Cerebellum</tissue>
        <tissue>Spinal cord</tissue>
    </source>
</reference>
<reference key="2">
    <citation type="journal article" date="2004" name="Genome Res.">
        <title>The status, quality, and expansion of the NIH full-length cDNA project: the Mammalian Gene Collection (MGC).</title>
        <authorList>
            <consortium name="The MGC Project Team"/>
        </authorList>
    </citation>
    <scope>NUCLEOTIDE SEQUENCE [LARGE SCALE MRNA]</scope>
    <source>
        <strain>C57BL/6J</strain>
        <tissue>Brain</tissue>
    </source>
</reference>
<proteinExistence type="evidence at transcript level"/>
<keyword id="KW-0106">Calcium</keyword>
<keyword id="KW-0107">Calcium channel</keyword>
<keyword id="KW-0109">Calcium transport</keyword>
<keyword id="KW-1003">Cell membrane</keyword>
<keyword id="KW-0407">Ion channel</keyword>
<keyword id="KW-0406">Ion transport</keyword>
<keyword id="KW-0472">Membrane</keyword>
<keyword id="KW-1185">Reference proteome</keyword>
<keyword id="KW-0812">Transmembrane</keyword>
<keyword id="KW-1133">Transmembrane helix</keyword>
<keyword id="KW-0813">Transport</keyword>
<dbReference type="EMBL" id="AK036013">
    <property type="protein sequence ID" value="BAC29276.1"/>
    <property type="molecule type" value="mRNA"/>
</dbReference>
<dbReference type="EMBL" id="AK042940">
    <property type="protein sequence ID" value="BAC31410.1"/>
    <property type="status" value="ALT_FRAME"/>
    <property type="molecule type" value="mRNA"/>
</dbReference>
<dbReference type="EMBL" id="AK079619">
    <property type="protein sequence ID" value="BAC37704.1"/>
    <property type="molecule type" value="mRNA"/>
</dbReference>
<dbReference type="EMBL" id="BC066070">
    <property type="protein sequence ID" value="AAH66070.1"/>
    <property type="molecule type" value="mRNA"/>
</dbReference>
<dbReference type="CCDS" id="CCDS39326.1"/>
<dbReference type="RefSeq" id="NP_848866.2">
    <property type="nucleotide sequence ID" value="NM_178751.3"/>
</dbReference>
<dbReference type="RefSeq" id="XP_006504493.1">
    <property type="nucleotide sequence ID" value="XM_006504430.5"/>
</dbReference>
<dbReference type="RefSeq" id="XP_006504494.1">
    <property type="nucleotide sequence ID" value="XM_006504431.5"/>
</dbReference>
<dbReference type="SMR" id="Q8BH10"/>
<dbReference type="BioGRID" id="234704">
    <property type="interactions" value="1"/>
</dbReference>
<dbReference type="FunCoup" id="Q8BH10">
    <property type="interactions" value="652"/>
</dbReference>
<dbReference type="STRING" id="10090.ENSMUSP00000037137"/>
<dbReference type="TCDB" id="1.A.52.1.3">
    <property type="family name" value="the ca(2+) release-activated ca(2+) (crac) channel (crac-c) family"/>
</dbReference>
<dbReference type="iPTMnet" id="Q8BH10"/>
<dbReference type="PhosphoSitePlus" id="Q8BH10"/>
<dbReference type="PaxDb" id="10090-ENSMUSP00000037137"/>
<dbReference type="ProteomicsDB" id="293938"/>
<dbReference type="Antibodypedia" id="31061">
    <property type="antibodies" value="167 antibodies from 28 providers"/>
</dbReference>
<dbReference type="DNASU" id="269717"/>
<dbReference type="Ensembl" id="ENSMUST00000041048.6">
    <property type="protein sequence ID" value="ENSMUSP00000037137.2"/>
    <property type="gene ID" value="ENSMUSG00000039747.12"/>
</dbReference>
<dbReference type="GeneID" id="269717"/>
<dbReference type="KEGG" id="mmu:269717"/>
<dbReference type="UCSC" id="uc009aad.2">
    <property type="organism name" value="mouse"/>
</dbReference>
<dbReference type="AGR" id="MGI:2443195"/>
<dbReference type="CTD" id="80228"/>
<dbReference type="MGI" id="MGI:2443195">
    <property type="gene designation" value="Orai2"/>
</dbReference>
<dbReference type="VEuPathDB" id="HostDB:ENSMUSG00000039747"/>
<dbReference type="eggNOG" id="KOG4298">
    <property type="taxonomic scope" value="Eukaryota"/>
</dbReference>
<dbReference type="GeneTree" id="ENSGT00390000015354"/>
<dbReference type="HOGENOM" id="CLU_062509_1_1_1"/>
<dbReference type="InParanoid" id="Q8BH10"/>
<dbReference type="OMA" id="LEMEYNY"/>
<dbReference type="OrthoDB" id="61124at2759"/>
<dbReference type="PhylomeDB" id="Q8BH10"/>
<dbReference type="TreeFam" id="TF313576"/>
<dbReference type="BioGRID-ORCS" id="269717">
    <property type="hits" value="3 hits in 77 CRISPR screens"/>
</dbReference>
<dbReference type="ChiTaRS" id="Orai2">
    <property type="organism name" value="mouse"/>
</dbReference>
<dbReference type="PRO" id="PR:Q8BH10"/>
<dbReference type="Proteomes" id="UP000000589">
    <property type="component" value="Chromosome 5"/>
</dbReference>
<dbReference type="RNAct" id="Q8BH10">
    <property type="molecule type" value="protein"/>
</dbReference>
<dbReference type="Bgee" id="ENSMUSG00000039747">
    <property type="expression patterns" value="Expressed in granulocyte and 161 other cell types or tissues"/>
</dbReference>
<dbReference type="ExpressionAtlas" id="Q8BH10">
    <property type="expression patterns" value="baseline and differential"/>
</dbReference>
<dbReference type="GO" id="GO:0016020">
    <property type="term" value="C:membrane"/>
    <property type="evidence" value="ECO:0000314"/>
    <property type="project" value="MGI"/>
</dbReference>
<dbReference type="GO" id="GO:0005886">
    <property type="term" value="C:plasma membrane"/>
    <property type="evidence" value="ECO:0007669"/>
    <property type="project" value="UniProtKB-SubCell"/>
</dbReference>
<dbReference type="GO" id="GO:0015279">
    <property type="term" value="F:store-operated calcium channel activity"/>
    <property type="evidence" value="ECO:0007669"/>
    <property type="project" value="Ensembl"/>
</dbReference>
<dbReference type="GO" id="GO:0002115">
    <property type="term" value="P:store-operated calcium entry"/>
    <property type="evidence" value="ECO:0007669"/>
    <property type="project" value="Ensembl"/>
</dbReference>
<dbReference type="FunFam" id="1.20.140.140:FF:000001">
    <property type="entry name" value="Calcium release-activated calcium modulator 1"/>
    <property type="match status" value="1"/>
</dbReference>
<dbReference type="Gene3D" id="1.20.140.140">
    <property type="entry name" value="Calcium release-activated calcium channel protein Orai"/>
    <property type="match status" value="1"/>
</dbReference>
<dbReference type="InterPro" id="IPR012446">
    <property type="entry name" value="CRAC_channel"/>
</dbReference>
<dbReference type="InterPro" id="IPR038350">
    <property type="entry name" value="Orai_sf"/>
</dbReference>
<dbReference type="PANTHER" id="PTHR31501">
    <property type="entry name" value="CALCIUM RELEASE-ACTIVATED CALCIUM CHANNEL PROTEIN 1"/>
    <property type="match status" value="1"/>
</dbReference>
<dbReference type="PANTHER" id="PTHR31501:SF5">
    <property type="entry name" value="PROTEIN ORAI-2"/>
    <property type="match status" value="1"/>
</dbReference>
<dbReference type="Pfam" id="PF07856">
    <property type="entry name" value="Orai-1"/>
    <property type="match status" value="1"/>
</dbReference>
<protein>
    <recommendedName>
        <fullName>Protein orai-2</fullName>
    </recommendedName>
    <alternativeName>
        <fullName>Transmembrane protein 142B</fullName>
    </alternativeName>
</protein>
<organism>
    <name type="scientific">Mus musculus</name>
    <name type="common">Mouse</name>
    <dbReference type="NCBI Taxonomy" id="10090"/>
    <lineage>
        <taxon>Eukaryota</taxon>
        <taxon>Metazoa</taxon>
        <taxon>Chordata</taxon>
        <taxon>Craniata</taxon>
        <taxon>Vertebrata</taxon>
        <taxon>Euteleostomi</taxon>
        <taxon>Mammalia</taxon>
        <taxon>Eutheria</taxon>
        <taxon>Euarchontoglires</taxon>
        <taxon>Glires</taxon>
        <taxon>Rodentia</taxon>
        <taxon>Myomorpha</taxon>
        <taxon>Muroidea</taxon>
        <taxon>Muridae</taxon>
        <taxon>Murinae</taxon>
        <taxon>Mus</taxon>
        <taxon>Mus</taxon>
    </lineage>
</organism>
<name>ORAI2_MOUSE</name>
<accession>Q8BH10</accession>
<accession>Q8C953</accession>
<sequence length="250" mass="28199">MSAELNVPMDPSAPACPEPGHKGMDYRDWVRRSYLELVTSNHHSVQALSWRKLYLSRAKLKASSRTSALLSGFAMVAMVEVQLETKYQYPQPLLIAFSACTTVLVAVHLFALLISTCILPNVEAVSNIHNLNSISESPHERMHPYIELAWGFSTVLGILLFLAEVVLLCWIKFLPVDAKDQPGSHSHTGWQAALVSTIIMVPVGLIFVVFTIHFYRSLVRHKTERHNREIEELHKLKVQLDGHERSLQVV</sequence>